<sequence>MSKLSRATRALRKPEAEGVIRTILRAGQAMPGPPLGPILGQRGVSINQFCKEFNEKTKDIKEGIPLPTKIFVKPDRTFEIKIGQPTVSYFLKAAAGIEKGARNTGKEVAGLVTLKHVYEIARVKAQDDAFALQDVPLSSVVRSIIGSARSLGIRVVKDLSSEELAAFQKERALFLAAQKEADLAAQAEAAKK</sequence>
<feature type="transit peptide" description="Mitochondrion" evidence="1">
    <location>
        <begin position="1"/>
        <end status="unknown"/>
    </location>
</feature>
<feature type="chain" id="PRO_0000239932" description="Large ribosomal subunit protein uL11m">
    <location>
        <begin status="unknown"/>
        <end position="192"/>
    </location>
</feature>
<feature type="sequence conflict" description="In Ref. 2; AAI10215." evidence="4" ref="2">
    <original>A</original>
    <variation>D</variation>
    <location>
        <position position="176"/>
    </location>
</feature>
<organism>
    <name type="scientific">Bos taurus</name>
    <name type="common">Bovine</name>
    <dbReference type="NCBI Taxonomy" id="9913"/>
    <lineage>
        <taxon>Eukaryota</taxon>
        <taxon>Metazoa</taxon>
        <taxon>Chordata</taxon>
        <taxon>Craniata</taxon>
        <taxon>Vertebrata</taxon>
        <taxon>Euteleostomi</taxon>
        <taxon>Mammalia</taxon>
        <taxon>Eutheria</taxon>
        <taxon>Laurasiatheria</taxon>
        <taxon>Artiodactyla</taxon>
        <taxon>Ruminantia</taxon>
        <taxon>Pecora</taxon>
        <taxon>Bovidae</taxon>
        <taxon>Bovinae</taxon>
        <taxon>Bos</taxon>
    </lineage>
</organism>
<keyword id="KW-0002">3D-structure</keyword>
<keyword id="KW-0496">Mitochondrion</keyword>
<keyword id="KW-1185">Reference proteome</keyword>
<keyword id="KW-0687">Ribonucleoprotein</keyword>
<keyword id="KW-0689">Ribosomal protein</keyword>
<keyword id="KW-0809">Transit peptide</keyword>
<reference key="1">
    <citation type="journal article" date="2005" name="BMC Genomics">
        <title>Characterization of 954 bovine full-CDS cDNA sequences.</title>
        <authorList>
            <person name="Harhay G.P."/>
            <person name="Sonstegard T.S."/>
            <person name="Keele J.W."/>
            <person name="Heaton M.P."/>
            <person name="Clawson M.L."/>
            <person name="Snelling W.M."/>
            <person name="Wiedmann R.T."/>
            <person name="Van Tassell C.P."/>
            <person name="Smith T.P.L."/>
        </authorList>
    </citation>
    <scope>NUCLEOTIDE SEQUENCE [LARGE SCALE MRNA]</scope>
</reference>
<reference key="2">
    <citation type="submission" date="2005-11" db="EMBL/GenBank/DDBJ databases">
        <authorList>
            <consortium name="NIH - Mammalian Gene Collection (MGC) project"/>
        </authorList>
    </citation>
    <scope>NUCLEOTIDE SEQUENCE [LARGE SCALE MRNA]</scope>
    <source>
        <strain>Crossbred X Angus</strain>
        <tissue>Liver</tissue>
    </source>
</reference>
<reference key="3">
    <citation type="journal article" date="2001" name="J. Biol. Chem.">
        <title>Structural compensation for the deficit of rRNA with proteins in the mammalian mitochondrial ribosome. Systematic analysis of protein components of the large ribosomal subunit from mammalian mitochondria.</title>
        <authorList>
            <person name="Suzuki T."/>
            <person name="Terasaki M."/>
            <person name="Takemoto-Hori C."/>
            <person name="Hanada T."/>
            <person name="Ueda T."/>
            <person name="Wada A."/>
            <person name="Watanabe K."/>
        </authorList>
    </citation>
    <scope>IDENTIFICATION BY MASS SPECTROMETRY</scope>
    <scope>SUBCELLULAR LOCATION</scope>
    <scope>SUBUNIT</scope>
</reference>
<reference key="4">
    <citation type="journal article" date="2006" name="J. Mol. Biol.">
        <title>A structural model for the large subunit of the mammalian mitochondrial ribosome.</title>
        <authorList>
            <person name="Mears J.A."/>
            <person name="Sharma M.R."/>
            <person name="Gutell R.R."/>
            <person name="McCook A.S."/>
            <person name="Richardson P.E."/>
            <person name="Caulfield T.R."/>
            <person name="Agrawal R.K."/>
            <person name="Harvey S.C."/>
        </authorList>
    </citation>
    <scope>STRUCTURE BY ELECTRON MICROSCOPY (12 ANGSTROMS)</scope>
    <scope>SUBCELLULAR LOCATION</scope>
</reference>
<protein>
    <recommendedName>
        <fullName evidence="4">Large ribosomal subunit protein uL11m</fullName>
    </recommendedName>
    <alternativeName>
        <fullName>39S ribosomal protein L11, mitochondrial</fullName>
        <shortName>L11mt</shortName>
        <shortName>MRP-L11</shortName>
    </alternativeName>
</protein>
<comment type="subunit">
    <text evidence="2">Component of the mitochondrial ribosome large subunit (39S) which comprises a 16S rRNA and about 50 distinct proteins.</text>
</comment>
<comment type="subcellular location">
    <subcellularLocation>
        <location evidence="2 3">Mitochondrion</location>
    </subcellularLocation>
</comment>
<comment type="similarity">
    <text evidence="4">Belongs to the universal ribosomal protein uL11 family.</text>
</comment>
<accession>Q2YDI0</accession>
<accession>Q58DQ9</accession>
<proteinExistence type="evidence at protein level"/>
<dbReference type="EMBL" id="BT021538">
    <property type="protein sequence ID" value="AAX46385.1"/>
    <property type="molecule type" value="mRNA"/>
</dbReference>
<dbReference type="EMBL" id="BC110214">
    <property type="protein sequence ID" value="AAI10215.1"/>
    <property type="molecule type" value="mRNA"/>
</dbReference>
<dbReference type="RefSeq" id="NP_001014932.1">
    <property type="nucleotide sequence ID" value="NM_001014932.1"/>
</dbReference>
<dbReference type="PDB" id="2FTC">
    <property type="method" value="EM"/>
    <property type="resolution" value="12.10 A"/>
    <property type="chains" value="G=13-157"/>
</dbReference>
<dbReference type="PDB" id="3IY9">
    <property type="method" value="EM"/>
    <property type="resolution" value="14.10 A"/>
    <property type="chains" value="G=13-157"/>
</dbReference>
<dbReference type="PDBsum" id="2FTC"/>
<dbReference type="PDBsum" id="3IY9"/>
<dbReference type="SMR" id="Q2YDI0"/>
<dbReference type="FunCoup" id="Q2YDI0">
    <property type="interactions" value="2508"/>
</dbReference>
<dbReference type="IntAct" id="Q2YDI0">
    <property type="interactions" value="1"/>
</dbReference>
<dbReference type="STRING" id="9913.ENSBTAP00000063389"/>
<dbReference type="PaxDb" id="9913-ENSBTAP00000019979"/>
<dbReference type="GeneID" id="515990"/>
<dbReference type="KEGG" id="bta:515990"/>
<dbReference type="CTD" id="65003"/>
<dbReference type="VEuPathDB" id="HostDB:ENSBTAG00000053687"/>
<dbReference type="eggNOG" id="KOG3257">
    <property type="taxonomic scope" value="Eukaryota"/>
</dbReference>
<dbReference type="HOGENOM" id="CLU_074237_1_1_1"/>
<dbReference type="InParanoid" id="Q2YDI0"/>
<dbReference type="OMA" id="CKQFNAK"/>
<dbReference type="OrthoDB" id="1091498at2759"/>
<dbReference type="TreeFam" id="TF313471"/>
<dbReference type="Reactome" id="R-BTA-5389840">
    <property type="pathway name" value="Mitochondrial translation elongation"/>
</dbReference>
<dbReference type="Reactome" id="R-BTA-5419276">
    <property type="pathway name" value="Mitochondrial translation termination"/>
</dbReference>
<dbReference type="EvolutionaryTrace" id="Q2YDI0"/>
<dbReference type="Proteomes" id="UP000009136">
    <property type="component" value="Chromosome 29"/>
</dbReference>
<dbReference type="Bgee" id="ENSBTAG00000053687">
    <property type="expression patterns" value="Expressed in tongue muscle and 103 other cell types or tissues"/>
</dbReference>
<dbReference type="GO" id="GO:0005743">
    <property type="term" value="C:mitochondrial inner membrane"/>
    <property type="evidence" value="ECO:0000304"/>
    <property type="project" value="Reactome"/>
</dbReference>
<dbReference type="GO" id="GO:0005762">
    <property type="term" value="C:mitochondrial large ribosomal subunit"/>
    <property type="evidence" value="ECO:0000250"/>
    <property type="project" value="UniProtKB"/>
</dbReference>
<dbReference type="GO" id="GO:0070180">
    <property type="term" value="F:large ribosomal subunit rRNA binding"/>
    <property type="evidence" value="ECO:0000318"/>
    <property type="project" value="GO_Central"/>
</dbReference>
<dbReference type="GO" id="GO:0003735">
    <property type="term" value="F:structural constituent of ribosome"/>
    <property type="evidence" value="ECO:0000318"/>
    <property type="project" value="GO_Central"/>
</dbReference>
<dbReference type="GO" id="GO:0006412">
    <property type="term" value="P:translation"/>
    <property type="evidence" value="ECO:0000318"/>
    <property type="project" value="GO_Central"/>
</dbReference>
<dbReference type="CDD" id="cd00349">
    <property type="entry name" value="Ribosomal_L11"/>
    <property type="match status" value="1"/>
</dbReference>
<dbReference type="FunFam" id="1.10.10.250:FF:000004">
    <property type="entry name" value="39S ribosomal protein L11, mitochondrial"/>
    <property type="match status" value="1"/>
</dbReference>
<dbReference type="FunFam" id="3.30.1550.10:FF:000003">
    <property type="entry name" value="39S ribosomal protein L11, mitochondrial"/>
    <property type="match status" value="1"/>
</dbReference>
<dbReference type="Gene3D" id="1.10.10.250">
    <property type="entry name" value="Ribosomal protein L11, C-terminal domain"/>
    <property type="match status" value="1"/>
</dbReference>
<dbReference type="Gene3D" id="3.30.1550.10">
    <property type="entry name" value="Ribosomal protein L11/L12, N-terminal domain"/>
    <property type="match status" value="1"/>
</dbReference>
<dbReference type="HAMAP" id="MF_00736">
    <property type="entry name" value="Ribosomal_uL11"/>
    <property type="match status" value="1"/>
</dbReference>
<dbReference type="InterPro" id="IPR000911">
    <property type="entry name" value="Ribosomal_uL11"/>
</dbReference>
<dbReference type="InterPro" id="IPR006519">
    <property type="entry name" value="Ribosomal_uL11_bac-typ"/>
</dbReference>
<dbReference type="InterPro" id="IPR020783">
    <property type="entry name" value="Ribosomal_uL11_C"/>
</dbReference>
<dbReference type="InterPro" id="IPR036769">
    <property type="entry name" value="Ribosomal_uL11_C_sf"/>
</dbReference>
<dbReference type="InterPro" id="IPR020784">
    <property type="entry name" value="Ribosomal_uL11_N"/>
</dbReference>
<dbReference type="InterPro" id="IPR036796">
    <property type="entry name" value="Ribosomal_uL11_N_sf"/>
</dbReference>
<dbReference type="NCBIfam" id="TIGR01632">
    <property type="entry name" value="L11_bact"/>
    <property type="match status" value="1"/>
</dbReference>
<dbReference type="PANTHER" id="PTHR11661">
    <property type="entry name" value="60S RIBOSOMAL PROTEIN L12"/>
    <property type="match status" value="1"/>
</dbReference>
<dbReference type="PANTHER" id="PTHR11661:SF1">
    <property type="entry name" value="LARGE RIBOSOMAL SUBUNIT PROTEIN UL11M"/>
    <property type="match status" value="1"/>
</dbReference>
<dbReference type="Pfam" id="PF00298">
    <property type="entry name" value="Ribosomal_L11"/>
    <property type="match status" value="1"/>
</dbReference>
<dbReference type="Pfam" id="PF03946">
    <property type="entry name" value="Ribosomal_L11_N"/>
    <property type="match status" value="1"/>
</dbReference>
<dbReference type="SMART" id="SM00649">
    <property type="entry name" value="RL11"/>
    <property type="match status" value="1"/>
</dbReference>
<dbReference type="SUPFAM" id="SSF54747">
    <property type="entry name" value="Ribosomal L11/L12e N-terminal domain"/>
    <property type="match status" value="1"/>
</dbReference>
<dbReference type="SUPFAM" id="SSF46906">
    <property type="entry name" value="Ribosomal protein L11, C-terminal domain"/>
    <property type="match status" value="1"/>
</dbReference>
<evidence type="ECO:0000255" key="1"/>
<evidence type="ECO:0000269" key="2">
    <source>
    </source>
</evidence>
<evidence type="ECO:0000269" key="3">
    <source>
    </source>
</evidence>
<evidence type="ECO:0000305" key="4"/>
<name>RM11_BOVIN</name>
<gene>
    <name type="primary">MRPL11</name>
</gene>